<name>RS6_BORAP</name>
<comment type="function">
    <text evidence="1">Binds together with bS18 to 16S ribosomal RNA.</text>
</comment>
<comment type="similarity">
    <text evidence="1">Belongs to the bacterial ribosomal protein bS6 family.</text>
</comment>
<protein>
    <recommendedName>
        <fullName evidence="1">Small ribosomal subunit protein bS6</fullName>
    </recommendedName>
    <alternativeName>
        <fullName evidence="2">30S ribosomal protein S6</fullName>
    </alternativeName>
</protein>
<evidence type="ECO:0000255" key="1">
    <source>
        <dbReference type="HAMAP-Rule" id="MF_00360"/>
    </source>
</evidence>
<evidence type="ECO:0000305" key="2"/>
<proteinExistence type="inferred from homology"/>
<sequence>MIKRYEACFLFKSEEIEYKGSLEEVKKSLELYGATDIISNFIGERALEYPIKKQARGRYEIIEFSMEGNNLKEFESKLKLIKSLLRYMILVKIVRKINTKKIKRRNFREFKDNIDKENLKSGSKIEVPTSSESADIQEK</sequence>
<keyword id="KW-0687">Ribonucleoprotein</keyword>
<keyword id="KW-0689">Ribosomal protein</keyword>
<keyword id="KW-0694">RNA-binding</keyword>
<keyword id="KW-0699">rRNA-binding</keyword>
<reference key="1">
    <citation type="journal article" date="2006" name="BMC Genomics">
        <title>Comparative genome analysis: selection pressure on the Borrelia vls cassettes is essential for infectivity.</title>
        <authorList>
            <person name="Gloeckner G."/>
            <person name="Schulte-Spechtel U."/>
            <person name="Schilhabel M."/>
            <person name="Felder M."/>
            <person name="Suehnel J."/>
            <person name="Wilske B."/>
            <person name="Platzer M."/>
        </authorList>
    </citation>
    <scope>NUCLEOTIDE SEQUENCE [LARGE SCALE GENOMIC DNA]</scope>
    <source>
        <strain>PKo</strain>
    </source>
</reference>
<reference key="2">
    <citation type="journal article" date="2011" name="J. Bacteriol.">
        <title>Whole-genome sequences of two Borrelia afzelii and two Borrelia garinii Lyme disease agent isolates.</title>
        <authorList>
            <person name="Casjens S.R."/>
            <person name="Mongodin E.F."/>
            <person name="Qiu W.G."/>
            <person name="Dunn J.J."/>
            <person name="Luft B.J."/>
            <person name="Fraser-Liggett C.M."/>
            <person name="Schutzer S.E."/>
        </authorList>
    </citation>
    <scope>NUCLEOTIDE SEQUENCE [LARGE SCALE GENOMIC DNA]</scope>
    <source>
        <strain>PKo</strain>
    </source>
</reference>
<accession>Q0SP49</accession>
<accession>G0IQW0</accession>
<organism>
    <name type="scientific">Borreliella afzelii (strain PKo)</name>
    <name type="common">Borrelia afzelii</name>
    <dbReference type="NCBI Taxonomy" id="390236"/>
    <lineage>
        <taxon>Bacteria</taxon>
        <taxon>Pseudomonadati</taxon>
        <taxon>Spirochaetota</taxon>
        <taxon>Spirochaetia</taxon>
        <taxon>Spirochaetales</taxon>
        <taxon>Borreliaceae</taxon>
        <taxon>Borreliella</taxon>
    </lineage>
</organism>
<gene>
    <name evidence="1" type="primary">rpsF</name>
    <name type="ordered locus">BAPKO_0116</name>
    <name type="ordered locus">BafPKo_0113</name>
</gene>
<dbReference type="EMBL" id="CP000395">
    <property type="protein sequence ID" value="ABH01379.1"/>
    <property type="molecule type" value="Genomic_DNA"/>
</dbReference>
<dbReference type="EMBL" id="CP002933">
    <property type="protein sequence ID" value="AEL69346.1"/>
    <property type="molecule type" value="Genomic_DNA"/>
</dbReference>
<dbReference type="RefSeq" id="WP_004790432.1">
    <property type="nucleotide sequence ID" value="NZ_CP160066.1"/>
</dbReference>
<dbReference type="SMR" id="Q0SP49"/>
<dbReference type="STRING" id="29518.BLA32_03715"/>
<dbReference type="GeneID" id="76831654"/>
<dbReference type="KEGG" id="baf:BAPKO_0116"/>
<dbReference type="KEGG" id="bafz:BafPKo_0113"/>
<dbReference type="PATRIC" id="fig|390236.22.peg.112"/>
<dbReference type="eggNOG" id="COG0360">
    <property type="taxonomic scope" value="Bacteria"/>
</dbReference>
<dbReference type="HOGENOM" id="CLU_1902635_0_0_12"/>
<dbReference type="OrthoDB" id="9812702at2"/>
<dbReference type="Proteomes" id="UP000005216">
    <property type="component" value="Chromosome"/>
</dbReference>
<dbReference type="GO" id="GO:1990904">
    <property type="term" value="C:ribonucleoprotein complex"/>
    <property type="evidence" value="ECO:0007669"/>
    <property type="project" value="UniProtKB-KW"/>
</dbReference>
<dbReference type="GO" id="GO:0005840">
    <property type="term" value="C:ribosome"/>
    <property type="evidence" value="ECO:0007669"/>
    <property type="project" value="UniProtKB-KW"/>
</dbReference>
<dbReference type="GO" id="GO:0019843">
    <property type="term" value="F:rRNA binding"/>
    <property type="evidence" value="ECO:0007669"/>
    <property type="project" value="UniProtKB-UniRule"/>
</dbReference>
<dbReference type="GO" id="GO:0003735">
    <property type="term" value="F:structural constituent of ribosome"/>
    <property type="evidence" value="ECO:0007669"/>
    <property type="project" value="InterPro"/>
</dbReference>
<dbReference type="GO" id="GO:0006412">
    <property type="term" value="P:translation"/>
    <property type="evidence" value="ECO:0007669"/>
    <property type="project" value="UniProtKB-UniRule"/>
</dbReference>
<dbReference type="CDD" id="cd00473">
    <property type="entry name" value="bS6"/>
    <property type="match status" value="1"/>
</dbReference>
<dbReference type="Gene3D" id="3.30.70.60">
    <property type="match status" value="1"/>
</dbReference>
<dbReference type="HAMAP" id="MF_00360">
    <property type="entry name" value="Ribosomal_bS6"/>
    <property type="match status" value="1"/>
</dbReference>
<dbReference type="InterPro" id="IPR000529">
    <property type="entry name" value="Ribosomal_bS6"/>
</dbReference>
<dbReference type="InterPro" id="IPR035980">
    <property type="entry name" value="Ribosomal_bS6_sf"/>
</dbReference>
<dbReference type="InterPro" id="IPR020814">
    <property type="entry name" value="Ribosomal_S6_plastid/chlpt"/>
</dbReference>
<dbReference type="InterPro" id="IPR014717">
    <property type="entry name" value="Transl_elong_EF1B/ribsomal_bS6"/>
</dbReference>
<dbReference type="NCBIfam" id="TIGR00166">
    <property type="entry name" value="S6"/>
    <property type="match status" value="1"/>
</dbReference>
<dbReference type="Pfam" id="PF01250">
    <property type="entry name" value="Ribosomal_S6"/>
    <property type="match status" value="1"/>
</dbReference>
<dbReference type="SUPFAM" id="SSF54995">
    <property type="entry name" value="Ribosomal protein S6"/>
    <property type="match status" value="1"/>
</dbReference>
<feature type="chain" id="PRO_1000005222" description="Small ribosomal subunit protein bS6">
    <location>
        <begin position="1"/>
        <end position="139"/>
    </location>
</feature>